<keyword id="KW-1003">Cell membrane</keyword>
<keyword id="KW-1015">Disulfide bond</keyword>
<keyword id="KW-0325">Glycoprotein</keyword>
<keyword id="KW-0340">Growth factor binding</keyword>
<keyword id="KW-0433">Leucine-rich repeat</keyword>
<keyword id="KW-0472">Membrane</keyword>
<keyword id="KW-1185">Reference proteome</keyword>
<keyword id="KW-0677">Repeat</keyword>
<keyword id="KW-0732">Signal</keyword>
<keyword id="KW-0812">Transmembrane</keyword>
<keyword id="KW-1133">Transmembrane helix</keyword>
<comment type="function">
    <text evidence="1 2">Key regulator of transforming growth factor beta (TGFB1, TGFB2 and TGFB3) that controls TGF-beta activation by maintaining it in a latent state during storage in extracellular space. Associates specifically via disulfide bonds with the Latency-associated peptide (LAP), which is the regulatory chain of TGF-beta, and regulates integrin-dependent activation of TGF-beta (By similarity). Able to outcompete LTBP1 for binding to LAP regulatory chain of TGF-beta (By similarity). Controls activation of TGF-beta-1 (TGFB1) on the surface of activated regulatory T-cells (Tregs). Required for epithelial fusion during palate development by regulating activation of TGF-beta-3 (TGFB3) (By similarity).</text>
</comment>
<comment type="subunit">
    <text evidence="1 2">Interacts with TGFB1; associates via disulfide bonds with the Latency-associated peptide chain (LAP) regulatory chain of TGFB1, leading to regulate activation of TGF-beta-1. Interacts with TGFB2 (By similarity). Interacts with TGFB3; associates via disulfide bonds with the Latency-associated peptide chain (LAP) regulatory chain of TGFB3, leading to regulate activation of TGF-beta-3 (By similarity). Interacts with LAPTM4B; decreases TGFB1 production in regulatory T-cells (By similarity).</text>
</comment>
<comment type="subcellular location">
    <subcellularLocation>
        <location evidence="2">Cell membrane</location>
        <topology evidence="3">Single-pass type I membrane protein</topology>
    </subcellularLocation>
    <subcellularLocation>
        <location evidence="2">Cell surface</location>
    </subcellularLocation>
</comment>
<comment type="similarity">
    <text evidence="4">Belongs to the LRRC32/LRRC33 family.</text>
</comment>
<evidence type="ECO:0000250" key="1">
    <source>
        <dbReference type="UniProtKB" id="G3XA59"/>
    </source>
</evidence>
<evidence type="ECO:0000250" key="2">
    <source>
        <dbReference type="UniProtKB" id="Q14392"/>
    </source>
</evidence>
<evidence type="ECO:0000255" key="3"/>
<evidence type="ECO:0000305" key="4"/>
<accession>Q5RF01</accession>
<name>LRC32_PONAB</name>
<feature type="signal peptide" evidence="3">
    <location>
        <begin position="1"/>
        <end position="17"/>
    </location>
</feature>
<feature type="chain" id="PRO_0000042588" description="Transforming growth factor beta activator LRRC32">
    <location>
        <begin position="18"/>
        <end position="662"/>
    </location>
</feature>
<feature type="topological domain" description="Extracellular" evidence="3">
    <location>
        <begin position="18"/>
        <end position="625"/>
    </location>
</feature>
<feature type="transmembrane region" description="Helical" evidence="3">
    <location>
        <begin position="626"/>
        <end position="646"/>
    </location>
</feature>
<feature type="topological domain" description="Cytoplasmic" evidence="3">
    <location>
        <begin position="647"/>
        <end position="662"/>
    </location>
</feature>
<feature type="domain" description="LRRNT" evidence="3">
    <location>
        <begin position="21"/>
        <end position="48"/>
    </location>
</feature>
<feature type="repeat" description="LRR 1" evidence="3">
    <location>
        <begin position="50"/>
        <end position="73"/>
    </location>
</feature>
<feature type="repeat" description="LRR 2" evidence="3">
    <location>
        <begin position="74"/>
        <end position="95"/>
    </location>
</feature>
<feature type="repeat" description="LRR 3" evidence="3">
    <location>
        <begin position="98"/>
        <end position="119"/>
    </location>
</feature>
<feature type="repeat" description="LRR 4" evidence="3">
    <location>
        <begin position="125"/>
        <end position="145"/>
    </location>
</feature>
<feature type="repeat" description="LRR 5" evidence="3">
    <location>
        <begin position="150"/>
        <end position="171"/>
    </location>
</feature>
<feature type="repeat" description="LRR 6" evidence="3">
    <location>
        <begin position="174"/>
        <end position="195"/>
    </location>
</feature>
<feature type="repeat" description="LRR 7" evidence="3">
    <location>
        <begin position="198"/>
        <end position="219"/>
    </location>
</feature>
<feature type="repeat" description="LRR 8" evidence="3">
    <location>
        <begin position="220"/>
        <end position="240"/>
    </location>
</feature>
<feature type="repeat" description="LRR 9" evidence="3">
    <location>
        <begin position="244"/>
        <end position="265"/>
    </location>
</feature>
<feature type="repeat" description="LRR 10" evidence="3">
    <location>
        <begin position="266"/>
        <end position="286"/>
    </location>
</feature>
<feature type="repeat" description="LRR 11" evidence="3">
    <location>
        <begin position="316"/>
        <end position="339"/>
    </location>
</feature>
<feature type="repeat" description="LRR 12" evidence="3">
    <location>
        <begin position="340"/>
        <end position="361"/>
    </location>
</feature>
<feature type="repeat" description="LRR 13" evidence="3">
    <location>
        <begin position="364"/>
        <end position="385"/>
    </location>
</feature>
<feature type="repeat" description="LRR 14" evidence="3">
    <location>
        <begin position="387"/>
        <end position="408"/>
    </location>
</feature>
<feature type="repeat" description="LRR 15" evidence="3">
    <location>
        <begin position="411"/>
        <end position="432"/>
    </location>
</feature>
<feature type="repeat" description="LRR 16" evidence="3">
    <location>
        <begin position="444"/>
        <end position="465"/>
    </location>
</feature>
<feature type="repeat" description="LRR 17" evidence="3">
    <location>
        <begin position="467"/>
        <end position="488"/>
    </location>
</feature>
<feature type="repeat" description="LRR 18" evidence="3">
    <location>
        <begin position="492"/>
        <end position="513"/>
    </location>
</feature>
<feature type="repeat" description="LRR 19" evidence="3">
    <location>
        <begin position="515"/>
        <end position="536"/>
    </location>
</feature>
<feature type="repeat" description="LRR 20" evidence="3">
    <location>
        <begin position="537"/>
        <end position="558"/>
    </location>
</feature>
<feature type="domain" description="LRRCT" evidence="3">
    <location>
        <begin position="571"/>
        <end position="620"/>
    </location>
</feature>
<feature type="glycosylation site" description="N-linked (GlcNAc...) asparagine" evidence="3">
    <location>
        <position position="203"/>
    </location>
</feature>
<feature type="glycosylation site" description="N-linked (GlcNAc...) asparagine" evidence="3">
    <location>
        <position position="271"/>
    </location>
</feature>
<feature type="glycosylation site" description="N-linked (GlcNAc...) asparagine" evidence="3">
    <location>
        <position position="308"/>
    </location>
</feature>
<feature type="glycosylation site" description="N-linked (GlcNAc...) asparagine" evidence="3">
    <location>
        <position position="345"/>
    </location>
</feature>
<feature type="glycosylation site" description="N-linked (GlcNAc...) asparagine" evidence="3">
    <location>
        <position position="545"/>
    </location>
</feature>
<feature type="disulfide bond" description="Interchain (with C-33 in TGFB1); in linked form" evidence="2">
    <location>
        <position position="211"/>
    </location>
</feature>
<feature type="disulfide bond" description="Interchain (with C-33 in TGFB1); in linked form" evidence="2">
    <location>
        <position position="350"/>
    </location>
</feature>
<sequence>MRPQILLLLALLTLGLAAQRQDKVPCKMVDKKVSCQGLGLLQVPSVLPPDTETLDLSGNQLRSILASPLGFYTALRHLDLSTNEISFLQPGAFQALTHLEHLSLAHNRLAMATALSAGGLGPLPRVTSLDLSGNSLYSGLLERLLGEAPSLHTLSLAENSLTRLTRHTFRDMPVLEQLDLHSNVLMDIEDGAFEGLPRLTHLNLSRNSLTCISDFSLQQLRVLDLSCNSIEAFQTASQPQAEFQLTWLDLRENKLLHFPDLAALPRLIYLNLSNNLIRLPTGPPQDSKGIHAPSEGWSALPLSTPSWNASARPLSQLLNLDLSYNEIELIPDSFLEHLTSLCFLNLSRNCLRTFEARRSGSLPCLMLLDLSHNALETLELGARALGSLRTLLLQGNALRDLPPYTFANLASLQRLNLQGNRVSPCGGPDEPGPSGCVAFSGITSLHSLSLVDNEIELLRAGAFLHTPLTELDLSSNPGLEVATGALGGLEASLEVLALQGNGLTVLQVDLPCFICLKRLNLAENRLSHLPAWTQAVSLEVLDLRNNSFSLLPGSAMGGLETSLRRLYLQGNPLSCCGNGWLAAQLHQGRVDVDATQDLICRFSSQEEVSLSHVRPEDCEKGGLKNINLIIILTFILVSAILLTTLATCCCVRRQKFNQQYKA</sequence>
<gene>
    <name evidence="2" type="primary">LRRC32</name>
</gene>
<dbReference type="EMBL" id="CR857361">
    <property type="protein sequence ID" value="CAH89656.1"/>
    <property type="molecule type" value="mRNA"/>
</dbReference>
<dbReference type="RefSeq" id="NP_001124746.1">
    <property type="nucleotide sequence ID" value="NM_001131274.2"/>
</dbReference>
<dbReference type="SMR" id="Q5RF01"/>
<dbReference type="FunCoup" id="Q5RF01">
    <property type="interactions" value="161"/>
</dbReference>
<dbReference type="STRING" id="9601.ENSPPYP00000004228"/>
<dbReference type="GlyCosmos" id="Q5RF01">
    <property type="glycosylation" value="5 sites, No reported glycans"/>
</dbReference>
<dbReference type="Ensembl" id="ENSPPYT00000004400.3">
    <property type="protein sequence ID" value="ENSPPYP00000004228.3"/>
    <property type="gene ID" value="ENSPPYG00000003700.3"/>
</dbReference>
<dbReference type="GeneID" id="100171595"/>
<dbReference type="KEGG" id="pon:100171595"/>
<dbReference type="CTD" id="2615"/>
<dbReference type="eggNOG" id="KOG0619">
    <property type="taxonomic scope" value="Eukaryota"/>
</dbReference>
<dbReference type="GeneTree" id="ENSGT00940000162288"/>
<dbReference type="HOGENOM" id="CLU_024194_1_0_1"/>
<dbReference type="InParanoid" id="Q5RF01"/>
<dbReference type="OMA" id="CIRRQKF"/>
<dbReference type="OrthoDB" id="8195690at2759"/>
<dbReference type="Proteomes" id="UP000001595">
    <property type="component" value="Chromosome 11"/>
</dbReference>
<dbReference type="GO" id="GO:0009986">
    <property type="term" value="C:cell surface"/>
    <property type="evidence" value="ECO:0000250"/>
    <property type="project" value="UniProtKB"/>
</dbReference>
<dbReference type="GO" id="GO:0005654">
    <property type="term" value="C:nucleoplasm"/>
    <property type="evidence" value="ECO:0007669"/>
    <property type="project" value="Ensembl"/>
</dbReference>
<dbReference type="GO" id="GO:0005886">
    <property type="term" value="C:plasma membrane"/>
    <property type="evidence" value="ECO:0007669"/>
    <property type="project" value="UniProtKB-SubCell"/>
</dbReference>
<dbReference type="GO" id="GO:0141069">
    <property type="term" value="F:receptor ligand inhibitor activity"/>
    <property type="evidence" value="ECO:0007669"/>
    <property type="project" value="Ensembl"/>
</dbReference>
<dbReference type="GO" id="GO:0050431">
    <property type="term" value="F:transforming growth factor beta binding"/>
    <property type="evidence" value="ECO:0000250"/>
    <property type="project" value="UniProtKB"/>
</dbReference>
<dbReference type="GO" id="GO:0035592">
    <property type="term" value="P:establishment of protein localization to extracellular region"/>
    <property type="evidence" value="ECO:0000250"/>
    <property type="project" value="UniProtKB"/>
</dbReference>
<dbReference type="GO" id="GO:0046007">
    <property type="term" value="P:negative regulation of activated T cell proliferation"/>
    <property type="evidence" value="ECO:0007669"/>
    <property type="project" value="Ensembl"/>
</dbReference>
<dbReference type="GO" id="GO:0001818">
    <property type="term" value="P:negative regulation of cytokine production"/>
    <property type="evidence" value="ECO:0007669"/>
    <property type="project" value="Ensembl"/>
</dbReference>
<dbReference type="GO" id="GO:0010628">
    <property type="term" value="P:positive regulation of gene expression"/>
    <property type="evidence" value="ECO:0007669"/>
    <property type="project" value="Ensembl"/>
</dbReference>
<dbReference type="GO" id="GO:0062009">
    <property type="term" value="P:secondary palate development"/>
    <property type="evidence" value="ECO:0000250"/>
    <property type="project" value="UniProtKB"/>
</dbReference>
<dbReference type="GO" id="GO:0007179">
    <property type="term" value="P:transforming growth factor beta receptor signaling pathway"/>
    <property type="evidence" value="ECO:0000250"/>
    <property type="project" value="UniProtKB"/>
</dbReference>
<dbReference type="FunFam" id="3.80.10.10:FF:000732">
    <property type="entry name" value="GD11101"/>
    <property type="match status" value="1"/>
</dbReference>
<dbReference type="FunFam" id="3.80.10.10:FF:000226">
    <property type="entry name" value="leucine-rich repeat-containing protein 32 isoform X1"/>
    <property type="match status" value="1"/>
</dbReference>
<dbReference type="FunFam" id="3.80.10.10:FF:000397">
    <property type="entry name" value="Transforming growth factor beta activator LRRC32"/>
    <property type="match status" value="1"/>
</dbReference>
<dbReference type="FunFam" id="3.80.10.10:FF:000482">
    <property type="entry name" value="Transforming growth factor beta activator LRRC32"/>
    <property type="match status" value="1"/>
</dbReference>
<dbReference type="Gene3D" id="3.80.10.10">
    <property type="entry name" value="Ribonuclease Inhibitor"/>
    <property type="match status" value="4"/>
</dbReference>
<dbReference type="InterPro" id="IPR050328">
    <property type="entry name" value="Dev_Immune_Receptor"/>
</dbReference>
<dbReference type="InterPro" id="IPR001611">
    <property type="entry name" value="Leu-rich_rpt"/>
</dbReference>
<dbReference type="InterPro" id="IPR003591">
    <property type="entry name" value="Leu-rich_rpt_typical-subtyp"/>
</dbReference>
<dbReference type="InterPro" id="IPR032675">
    <property type="entry name" value="LRR_dom_sf"/>
</dbReference>
<dbReference type="InterPro" id="IPR000372">
    <property type="entry name" value="LRRNT"/>
</dbReference>
<dbReference type="PANTHER" id="PTHR24373">
    <property type="entry name" value="SLIT RELATED LEUCINE-RICH REPEAT NEURONAL PROTEIN"/>
    <property type="match status" value="1"/>
</dbReference>
<dbReference type="PANTHER" id="PTHR24373:SF275">
    <property type="entry name" value="TIR DOMAIN-CONTAINING PROTEIN"/>
    <property type="match status" value="1"/>
</dbReference>
<dbReference type="Pfam" id="PF13855">
    <property type="entry name" value="LRR_8"/>
    <property type="match status" value="4"/>
</dbReference>
<dbReference type="Pfam" id="PF01462">
    <property type="entry name" value="LRRNT"/>
    <property type="match status" value="1"/>
</dbReference>
<dbReference type="SMART" id="SM00364">
    <property type="entry name" value="LRR_BAC"/>
    <property type="match status" value="7"/>
</dbReference>
<dbReference type="SMART" id="SM00368">
    <property type="entry name" value="LRR_RI"/>
    <property type="match status" value="3"/>
</dbReference>
<dbReference type="SMART" id="SM00369">
    <property type="entry name" value="LRR_TYP"/>
    <property type="match status" value="14"/>
</dbReference>
<dbReference type="SMART" id="SM00013">
    <property type="entry name" value="LRRNT"/>
    <property type="match status" value="1"/>
</dbReference>
<dbReference type="SUPFAM" id="SSF52058">
    <property type="entry name" value="L domain-like"/>
    <property type="match status" value="1"/>
</dbReference>
<dbReference type="SUPFAM" id="SSF52047">
    <property type="entry name" value="RNI-like"/>
    <property type="match status" value="1"/>
</dbReference>
<dbReference type="PROSITE" id="PS51450">
    <property type="entry name" value="LRR"/>
    <property type="match status" value="20"/>
</dbReference>
<protein>
    <recommendedName>
        <fullName evidence="2">Transforming growth factor beta activator LRRC32</fullName>
    </recommendedName>
    <alternativeName>
        <fullName evidence="2">Leucine-rich repeat-containing protein 32</fullName>
    </alternativeName>
</protein>
<proteinExistence type="evidence at transcript level"/>
<organism>
    <name type="scientific">Pongo abelii</name>
    <name type="common">Sumatran orangutan</name>
    <name type="synonym">Pongo pygmaeus abelii</name>
    <dbReference type="NCBI Taxonomy" id="9601"/>
    <lineage>
        <taxon>Eukaryota</taxon>
        <taxon>Metazoa</taxon>
        <taxon>Chordata</taxon>
        <taxon>Craniata</taxon>
        <taxon>Vertebrata</taxon>
        <taxon>Euteleostomi</taxon>
        <taxon>Mammalia</taxon>
        <taxon>Eutheria</taxon>
        <taxon>Euarchontoglires</taxon>
        <taxon>Primates</taxon>
        <taxon>Haplorrhini</taxon>
        <taxon>Catarrhini</taxon>
        <taxon>Hominidae</taxon>
        <taxon>Pongo</taxon>
    </lineage>
</organism>
<reference key="1">
    <citation type="submission" date="2004-11" db="EMBL/GenBank/DDBJ databases">
        <authorList>
            <consortium name="The German cDNA consortium"/>
        </authorList>
    </citation>
    <scope>NUCLEOTIDE SEQUENCE [LARGE SCALE MRNA]</scope>
    <source>
        <tissue>Kidney</tissue>
    </source>
</reference>